<reference key="1">
    <citation type="journal article" date="1994" name="Plant Physiol.">
        <title>Characterization of PRP1 and PRP2 from Medicago truncatula.</title>
        <authorList>
            <person name="Wilson R.C."/>
            <person name="Cooper J.B."/>
        </authorList>
    </citation>
    <scope>NUCLEOTIDE SEQUENCE [MRNA]</scope>
    <source>
        <strain>cv. Jemalong</strain>
        <tissue>Root nodule</tissue>
    </source>
</reference>
<proteinExistence type="evidence at transcript level"/>
<comment type="function">
    <text evidence="1">This is a developmentally regulated putative cell wall protein.</text>
</comment>
<comment type="subcellular location">
    <subcellularLocation>
        <location evidence="4">Secreted</location>
        <location evidence="4">Cell wall</location>
    </subcellularLocation>
</comment>
<comment type="tissue specificity">
    <text>Expressed in hypocotyls, roots and mature root nodules.</text>
</comment>
<comment type="similarity">
    <text evidence="4">Belongs to the plant proline-rich protein superfamily. ENOD12 family.</text>
</comment>
<organism>
    <name type="scientific">Medicago truncatula</name>
    <name type="common">Barrel medic</name>
    <name type="synonym">Medicago tribuloides</name>
    <dbReference type="NCBI Taxonomy" id="3880"/>
    <lineage>
        <taxon>Eukaryota</taxon>
        <taxon>Viridiplantae</taxon>
        <taxon>Streptophyta</taxon>
        <taxon>Embryophyta</taxon>
        <taxon>Tracheophyta</taxon>
        <taxon>Spermatophyta</taxon>
        <taxon>Magnoliopsida</taxon>
        <taxon>eudicotyledons</taxon>
        <taxon>Gunneridae</taxon>
        <taxon>Pentapetalae</taxon>
        <taxon>rosids</taxon>
        <taxon>fabids</taxon>
        <taxon>Fabales</taxon>
        <taxon>Fabaceae</taxon>
        <taxon>Papilionoideae</taxon>
        <taxon>50 kb inversion clade</taxon>
        <taxon>NPAAA clade</taxon>
        <taxon>Hologalegina</taxon>
        <taxon>IRL clade</taxon>
        <taxon>Trifolieae</taxon>
        <taxon>Medicago</taxon>
    </lineage>
</organism>
<feature type="signal peptide" evidence="2">
    <location>
        <begin position="1"/>
        <end position="22"/>
    </location>
</feature>
<feature type="chain" id="PRO_0000019809" description="Repetitive proline-rich cell wall protein 2">
    <location>
        <begin position="23"/>
        <end position="371"/>
    </location>
</feature>
<feature type="repeat" description="1">
    <location>
        <begin position="32"/>
        <end position="36"/>
    </location>
</feature>
<feature type="repeat" description="2">
    <location>
        <begin position="37"/>
        <end position="41"/>
    </location>
</feature>
<feature type="repeat" description="3">
    <location>
        <begin position="42"/>
        <end position="46"/>
    </location>
</feature>
<feature type="repeat" description="4">
    <location>
        <begin position="47"/>
        <end position="51"/>
    </location>
</feature>
<feature type="repeat" description="5">
    <location>
        <begin position="52"/>
        <end position="56"/>
    </location>
</feature>
<feature type="repeat" description="6">
    <location>
        <begin position="57"/>
        <end position="61"/>
    </location>
</feature>
<feature type="repeat" description="7">
    <location>
        <begin position="62"/>
        <end position="66"/>
    </location>
</feature>
<feature type="repeat" description="8">
    <location>
        <begin position="67"/>
        <end position="71"/>
    </location>
</feature>
<feature type="repeat" description="9">
    <location>
        <begin position="72"/>
        <end position="76"/>
    </location>
</feature>
<feature type="repeat" description="10">
    <location>
        <begin position="77"/>
        <end position="81"/>
    </location>
</feature>
<feature type="repeat" description="11">
    <location>
        <begin position="82"/>
        <end position="86"/>
    </location>
</feature>
<feature type="repeat" description="12">
    <location>
        <begin position="87"/>
        <end position="91"/>
    </location>
</feature>
<feature type="repeat" description="13">
    <location>
        <begin position="92"/>
        <end position="96"/>
    </location>
</feature>
<feature type="repeat" description="14">
    <location>
        <begin position="97"/>
        <end position="101"/>
    </location>
</feature>
<feature type="repeat" description="15">
    <location>
        <begin position="102"/>
        <end position="106"/>
    </location>
</feature>
<feature type="repeat" description="16">
    <location>
        <begin position="107"/>
        <end position="111"/>
    </location>
</feature>
<feature type="repeat" description="17">
    <location>
        <begin position="112"/>
        <end position="116"/>
    </location>
</feature>
<feature type="repeat" description="18">
    <location>
        <begin position="117"/>
        <end position="121"/>
    </location>
</feature>
<feature type="repeat" description="19">
    <location>
        <begin position="122"/>
        <end position="126"/>
    </location>
</feature>
<feature type="repeat" description="20">
    <location>
        <begin position="127"/>
        <end position="131"/>
    </location>
</feature>
<feature type="repeat" description="21">
    <location>
        <begin position="132"/>
        <end position="136"/>
    </location>
</feature>
<feature type="repeat" description="22">
    <location>
        <begin position="137"/>
        <end position="141"/>
    </location>
</feature>
<feature type="repeat" description="23">
    <location>
        <begin position="142"/>
        <end position="146"/>
    </location>
</feature>
<feature type="repeat" description="24">
    <location>
        <begin position="147"/>
        <end position="151"/>
    </location>
</feature>
<feature type="repeat" description="25">
    <location>
        <begin position="152"/>
        <end position="156"/>
    </location>
</feature>
<feature type="repeat" description="26">
    <location>
        <begin position="157"/>
        <end position="161"/>
    </location>
</feature>
<feature type="repeat" description="27">
    <location>
        <begin position="162"/>
        <end position="166"/>
    </location>
</feature>
<feature type="repeat" description="28">
    <location>
        <begin position="167"/>
        <end position="171"/>
    </location>
</feature>
<feature type="repeat" description="29">
    <location>
        <begin position="172"/>
        <end position="176"/>
    </location>
</feature>
<feature type="repeat" description="30">
    <location>
        <begin position="177"/>
        <end position="181"/>
    </location>
</feature>
<feature type="repeat" description="31">
    <location>
        <begin position="182"/>
        <end position="186"/>
    </location>
</feature>
<feature type="repeat" description="32">
    <location>
        <begin position="187"/>
        <end position="191"/>
    </location>
</feature>
<feature type="repeat" description="33">
    <location>
        <begin position="192"/>
        <end position="196"/>
    </location>
</feature>
<feature type="repeat" description="34">
    <location>
        <begin position="197"/>
        <end position="201"/>
    </location>
</feature>
<feature type="repeat" description="35">
    <location>
        <begin position="202"/>
        <end position="206"/>
    </location>
</feature>
<feature type="repeat" description="36">
    <location>
        <begin position="207"/>
        <end position="211"/>
    </location>
</feature>
<feature type="repeat" description="37">
    <location>
        <begin position="212"/>
        <end position="216"/>
    </location>
</feature>
<feature type="repeat" description="38">
    <location>
        <begin position="217"/>
        <end position="221"/>
    </location>
</feature>
<feature type="repeat" description="39">
    <location>
        <begin position="222"/>
        <end position="226"/>
    </location>
</feature>
<feature type="repeat" description="40">
    <location>
        <begin position="227"/>
        <end position="231"/>
    </location>
</feature>
<feature type="repeat" description="41">
    <location>
        <begin position="232"/>
        <end position="236"/>
    </location>
</feature>
<feature type="repeat" description="42">
    <location>
        <begin position="237"/>
        <end position="241"/>
    </location>
</feature>
<feature type="repeat" description="43">
    <location>
        <begin position="242"/>
        <end position="246"/>
    </location>
</feature>
<feature type="repeat" description="44">
    <location>
        <begin position="247"/>
        <end position="251"/>
    </location>
</feature>
<feature type="repeat" description="45">
    <location>
        <begin position="252"/>
        <end position="256"/>
    </location>
</feature>
<feature type="repeat" description="46">
    <location>
        <begin position="257"/>
        <end position="261"/>
    </location>
</feature>
<feature type="repeat" description="47">
    <location>
        <begin position="262"/>
        <end position="266"/>
    </location>
</feature>
<feature type="repeat" description="48">
    <location>
        <begin position="267"/>
        <end position="271"/>
    </location>
</feature>
<feature type="repeat" description="49">
    <location>
        <begin position="272"/>
        <end position="276"/>
    </location>
</feature>
<feature type="repeat" description="50">
    <location>
        <begin position="277"/>
        <end position="281"/>
    </location>
</feature>
<feature type="repeat" description="51">
    <location>
        <begin position="282"/>
        <end position="286"/>
    </location>
</feature>
<feature type="repeat" description="52">
    <location>
        <begin position="287"/>
        <end position="291"/>
    </location>
</feature>
<feature type="repeat" description="54">
    <location>
        <begin position="292"/>
        <end position="296"/>
    </location>
</feature>
<feature type="repeat" description="54">
    <location>
        <begin position="297"/>
        <end position="301"/>
    </location>
</feature>
<feature type="repeat" description="55">
    <location>
        <begin position="302"/>
        <end position="306"/>
    </location>
</feature>
<feature type="repeat" description="56">
    <location>
        <begin position="307"/>
        <end position="311"/>
    </location>
</feature>
<feature type="repeat" description="57">
    <location>
        <begin position="312"/>
        <end position="316"/>
    </location>
</feature>
<feature type="repeat" description="58">
    <location>
        <begin position="317"/>
        <end position="321"/>
    </location>
</feature>
<feature type="repeat" description="59">
    <location>
        <begin position="322"/>
        <end position="326"/>
    </location>
</feature>
<feature type="repeat" description="60">
    <location>
        <begin position="327"/>
        <end position="331"/>
    </location>
</feature>
<feature type="repeat" description="61">
    <location>
        <begin position="332"/>
        <end position="336"/>
    </location>
</feature>
<feature type="repeat" description="62">
    <location>
        <begin position="337"/>
        <end position="341"/>
    </location>
</feature>
<feature type="repeat" description="63">
    <location>
        <begin position="342"/>
        <end position="346"/>
    </location>
</feature>
<feature type="repeat" description="64">
    <location>
        <begin position="347"/>
        <end position="351"/>
    </location>
</feature>
<feature type="repeat" description="65">
    <location>
        <begin position="352"/>
        <end position="356"/>
    </location>
</feature>
<feature type="repeat" description="66">
    <location>
        <begin position="357"/>
        <end position="361"/>
    </location>
</feature>
<feature type="repeat" description="67; approximate">
    <location>
        <begin position="362"/>
        <end position="366"/>
    </location>
</feature>
<feature type="region of interest" description="67 X 5 AA approximate tandem repeats of P-P-[IV]-[EY]-K">
    <location>
        <begin position="32"/>
        <end position="366"/>
    </location>
</feature>
<feature type="region of interest" description="Disordered" evidence="3">
    <location>
        <begin position="49"/>
        <end position="317"/>
    </location>
</feature>
<feature type="region of interest" description="Disordered" evidence="3">
    <location>
        <begin position="339"/>
        <end position="371"/>
    </location>
</feature>
<protein>
    <recommendedName>
        <fullName>Repetitive proline-rich cell wall protein 2</fullName>
    </recommendedName>
</protein>
<sequence length="371" mass="42079">MASSNLLVLLLFALFAIPRGLANYDKPPVYQPPVYKPPVEKPPVYKPPVEKPPVYKPPVEKPPVYKPPVEKPPVYKPPVEKPPVYKPPVEKPPVYKPPVEKPPVYKPPVEKPPVYKPPVEKPPVYKPPVEKPPVYKPPVEKPPVYKPPVEKPPVYKPPVEKPPVYKPPVEKPPVYKPPVEKPPVYKPPVEKPPVYKPPVEKPPVYKPPVEKPPVYKPPVEKPPVYKPPVEKPPIYKPPVEKPPVYKPPVEKPPVYKPPVEKPPIYKPPVEKPPVYKPPVEKPPVYKPPVEKPPVYKPPVEKPPVYKPPVEKPPVYKPPVYKPPVYKPPVEKPPVYKPPVYKPPVEKPPVYKPPVYKPPVEKPPVYGPPHHP</sequence>
<accession>Q40375</accession>
<gene>
    <name type="primary">PRP2</name>
</gene>
<dbReference type="EMBL" id="L25799">
    <property type="protein sequence ID" value="AAA62447.1"/>
    <property type="molecule type" value="mRNA"/>
</dbReference>
<dbReference type="GO" id="GO:0005576">
    <property type="term" value="C:extracellular region"/>
    <property type="evidence" value="ECO:0007669"/>
    <property type="project" value="UniProtKB-KW"/>
</dbReference>
<dbReference type="GO" id="GO:0005199">
    <property type="term" value="F:structural constituent of cell wall"/>
    <property type="evidence" value="ECO:0007669"/>
    <property type="project" value="InterPro"/>
</dbReference>
<dbReference type="InterPro" id="IPR002964">
    <property type="entry name" value="Adhesive_plaq"/>
</dbReference>
<dbReference type="InterPro" id="IPR003883">
    <property type="entry name" value="Extensin-like"/>
</dbReference>
<dbReference type="InterPro" id="IPR051308">
    <property type="entry name" value="Proline-rich_CW_protein"/>
</dbReference>
<dbReference type="PANTHER" id="PTHR34629">
    <property type="entry name" value="PROLINE-RICH EXTENSIN-LIKE PROTEIN EPR1"/>
    <property type="match status" value="1"/>
</dbReference>
<dbReference type="PANTHER" id="PTHR34629:SF4">
    <property type="entry name" value="REPETITIVE PROLINE-RICH CELL WALL PROTEIN 3"/>
    <property type="match status" value="1"/>
</dbReference>
<dbReference type="Pfam" id="PF02095">
    <property type="entry name" value="Extensin_1"/>
    <property type="match status" value="3"/>
</dbReference>
<dbReference type="PRINTS" id="PR01216">
    <property type="entry name" value="ADHESIVEI"/>
</dbReference>
<keyword id="KW-0134">Cell wall</keyword>
<keyword id="KW-0217">Developmental protein</keyword>
<keyword id="KW-0677">Repeat</keyword>
<keyword id="KW-0964">Secreted</keyword>
<keyword id="KW-0732">Signal</keyword>
<name>PRP2_MEDTR</name>
<evidence type="ECO:0000250" key="1"/>
<evidence type="ECO:0000255" key="2"/>
<evidence type="ECO:0000256" key="3">
    <source>
        <dbReference type="SAM" id="MobiDB-lite"/>
    </source>
</evidence>
<evidence type="ECO:0000305" key="4"/>